<name>ATPD_CAMC1</name>
<organism>
    <name type="scientific">Campylobacter concisus (strain 13826)</name>
    <dbReference type="NCBI Taxonomy" id="360104"/>
    <lineage>
        <taxon>Bacteria</taxon>
        <taxon>Pseudomonadati</taxon>
        <taxon>Campylobacterota</taxon>
        <taxon>Epsilonproteobacteria</taxon>
        <taxon>Campylobacterales</taxon>
        <taxon>Campylobacteraceae</taxon>
        <taxon>Campylobacter</taxon>
    </lineage>
</organism>
<sequence length="176" mass="19686">MNEVVAKKYVKAILSDVKSNELNAFVENLSELAAAFASDKFKSIISLPTLKASQKVEFVLSLVKNQDAKFANFIKLLGANKRLELIPAILDEMKIEQSLLENTYRGEVVGNFDLSAEQLKALEENFSKKFNSKIKLDGSKSDYNGVKVELDDLGVEVNFSIDRLKSQMSEYILKAI</sequence>
<comment type="function">
    <text evidence="1">F(1)F(0) ATP synthase produces ATP from ADP in the presence of a proton or sodium gradient. F-type ATPases consist of two structural domains, F(1) containing the extramembraneous catalytic core and F(0) containing the membrane proton channel, linked together by a central stalk and a peripheral stalk. During catalysis, ATP synthesis in the catalytic domain of F(1) is coupled via a rotary mechanism of the central stalk subunits to proton translocation.</text>
</comment>
<comment type="function">
    <text evidence="1">This protein is part of the stalk that links CF(0) to CF(1). It either transmits conformational changes from CF(0) to CF(1) or is implicated in proton conduction.</text>
</comment>
<comment type="subunit">
    <text evidence="1">F-type ATPases have 2 components, F(1) - the catalytic core - and F(0) - the membrane proton channel. F(1) has five subunits: alpha(3), beta(3), gamma(1), delta(1), epsilon(1). F(0) has three main subunits: a(1), b(2) and c(10-14). The alpha and beta chains form an alternating ring which encloses part of the gamma chain. F(1) is attached to F(0) by a central stalk formed by the gamma and epsilon chains, while a peripheral stalk is formed by the delta and b chains.</text>
</comment>
<comment type="subcellular location">
    <subcellularLocation>
        <location evidence="1">Cell inner membrane</location>
        <topology evidence="1">Peripheral membrane protein</topology>
    </subcellularLocation>
</comment>
<comment type="similarity">
    <text evidence="1">Belongs to the ATPase delta chain family.</text>
</comment>
<dbReference type="EMBL" id="CP000792">
    <property type="protein sequence ID" value="EAT97440.1"/>
    <property type="molecule type" value="Genomic_DNA"/>
</dbReference>
<dbReference type="RefSeq" id="WP_002939419.1">
    <property type="nucleotide sequence ID" value="NC_009802.2"/>
</dbReference>
<dbReference type="SMR" id="A7ZC34"/>
<dbReference type="STRING" id="360104.CCC13826_0914"/>
<dbReference type="KEGG" id="cco:CCC13826_0914"/>
<dbReference type="eggNOG" id="COG0712">
    <property type="taxonomic scope" value="Bacteria"/>
</dbReference>
<dbReference type="HOGENOM" id="CLU_085114_3_1_7"/>
<dbReference type="OrthoDB" id="5339308at2"/>
<dbReference type="Proteomes" id="UP000001121">
    <property type="component" value="Chromosome"/>
</dbReference>
<dbReference type="GO" id="GO:0005886">
    <property type="term" value="C:plasma membrane"/>
    <property type="evidence" value="ECO:0007669"/>
    <property type="project" value="UniProtKB-SubCell"/>
</dbReference>
<dbReference type="GO" id="GO:0045259">
    <property type="term" value="C:proton-transporting ATP synthase complex"/>
    <property type="evidence" value="ECO:0007669"/>
    <property type="project" value="UniProtKB-KW"/>
</dbReference>
<dbReference type="GO" id="GO:0046933">
    <property type="term" value="F:proton-transporting ATP synthase activity, rotational mechanism"/>
    <property type="evidence" value="ECO:0007669"/>
    <property type="project" value="UniProtKB-UniRule"/>
</dbReference>
<dbReference type="Gene3D" id="1.10.520.20">
    <property type="entry name" value="N-terminal domain of the delta subunit of the F1F0-ATP synthase"/>
    <property type="match status" value="1"/>
</dbReference>
<dbReference type="HAMAP" id="MF_01416">
    <property type="entry name" value="ATP_synth_delta_bact"/>
    <property type="match status" value="1"/>
</dbReference>
<dbReference type="InterPro" id="IPR026015">
    <property type="entry name" value="ATP_synth_OSCP/delta_N_sf"/>
</dbReference>
<dbReference type="InterPro" id="IPR000711">
    <property type="entry name" value="ATPase_OSCP/dsu"/>
</dbReference>
<dbReference type="NCBIfam" id="NF006291">
    <property type="entry name" value="PRK08474.1"/>
    <property type="match status" value="1"/>
</dbReference>
<dbReference type="Pfam" id="PF00213">
    <property type="entry name" value="OSCP"/>
    <property type="match status" value="1"/>
</dbReference>
<dbReference type="SUPFAM" id="SSF47928">
    <property type="entry name" value="N-terminal domain of the delta subunit of the F1F0-ATP synthase"/>
    <property type="match status" value="1"/>
</dbReference>
<proteinExistence type="inferred from homology"/>
<keyword id="KW-0066">ATP synthesis</keyword>
<keyword id="KW-0997">Cell inner membrane</keyword>
<keyword id="KW-1003">Cell membrane</keyword>
<keyword id="KW-0139">CF(1)</keyword>
<keyword id="KW-0375">Hydrogen ion transport</keyword>
<keyword id="KW-0406">Ion transport</keyword>
<keyword id="KW-0472">Membrane</keyword>
<keyword id="KW-0813">Transport</keyword>
<evidence type="ECO:0000255" key="1">
    <source>
        <dbReference type="HAMAP-Rule" id="MF_01416"/>
    </source>
</evidence>
<protein>
    <recommendedName>
        <fullName evidence="1">ATP synthase subunit delta</fullName>
    </recommendedName>
    <alternativeName>
        <fullName evidence="1">ATP synthase F(1) sector subunit delta</fullName>
    </alternativeName>
    <alternativeName>
        <fullName evidence="1">F-type ATPase subunit delta</fullName>
        <shortName evidence="1">F-ATPase subunit delta</shortName>
    </alternativeName>
</protein>
<accession>A7ZC34</accession>
<gene>
    <name evidence="1" type="primary">atpH</name>
    <name type="ordered locus">Ccon26_04410</name>
    <name type="ORF">CCC13826_0914</name>
</gene>
<reference key="1">
    <citation type="submission" date="2007-10" db="EMBL/GenBank/DDBJ databases">
        <title>Genome sequence of Campylobacter concisus 13826 isolated from human feces.</title>
        <authorList>
            <person name="Fouts D.E."/>
            <person name="Mongodin E.F."/>
            <person name="Puiu D."/>
            <person name="Sebastian Y."/>
            <person name="Miller W.G."/>
            <person name="Mandrell R.E."/>
            <person name="On S."/>
            <person name="Nelson K.E."/>
        </authorList>
    </citation>
    <scope>NUCLEOTIDE SEQUENCE [LARGE SCALE GENOMIC DNA]</scope>
    <source>
        <strain>13826</strain>
    </source>
</reference>
<feature type="chain" id="PRO_0000382069" description="ATP synthase subunit delta">
    <location>
        <begin position="1"/>
        <end position="176"/>
    </location>
</feature>